<sequence length="532" mass="58439">MDSLQLWQRYCDWLYYHPGLEIFVDISRIRFTPPQVEALRPRFAQAFADMQALEAGAIANPDEGRQVGHYWLRAPELAPTPEIRQAIQDSIERVETFAEKIHRGTIPASGGGRFTELLCIGIGGSALGPQFVAEALAPLHPPLNIHFIDNTDPDGFDRVLGRLADQLGQTLVITTSKSGGTPEPRNGLVEVKLAYQKAGIPFSAHAVAITGPGSQLEQQARQEGWLEVFPIFDWVGGRTSETSPVGLLPAALQGIDIRALLAGAATMDEATRLPHLERNPAALLAMAWYIVGQGQGRKDMVVLPYKDRLLLFSRYLQQLVMESLGKSHDLNGNRVEQGIAVYGNKGTTDQHAYVQQLRDGLNNFFVTFIEVLQDREPGIPSPFVEPQVTSGDYLNGLLQGTRQALYENGRDSITVTLPRVDARSVGALIALYERAVGLYASLIQINAYHQPGVEAGKKAASAVLELQRRLLETVQEQQGSLTLPQLAEKLGCPERIETLYWIVRHLHANGRGVLLTGDPARPLELSIQPQPA</sequence>
<protein>
    <recommendedName>
        <fullName evidence="1">Glucose-6-phosphate isomerase</fullName>
        <shortName evidence="1">GPI</shortName>
        <ecNumber evidence="1">5.3.1.9</ecNumber>
    </recommendedName>
    <alternativeName>
        <fullName evidence="1">Phosphoglucose isomerase</fullName>
        <shortName evidence="1">PGI</shortName>
    </alternativeName>
    <alternativeName>
        <fullName evidence="1">Phosphohexose isomerase</fullName>
        <shortName evidence="1">PHI</shortName>
    </alternativeName>
</protein>
<name>G6PI_SYNJB</name>
<dbReference type="EC" id="5.3.1.9" evidence="1"/>
<dbReference type="EMBL" id="CP000240">
    <property type="protein sequence ID" value="ABD03838.1"/>
    <property type="molecule type" value="Genomic_DNA"/>
</dbReference>
<dbReference type="RefSeq" id="WP_011434454.1">
    <property type="nucleotide sequence ID" value="NC_007776.1"/>
</dbReference>
<dbReference type="SMR" id="Q2JHU0"/>
<dbReference type="STRING" id="321332.CYB_2919"/>
<dbReference type="KEGG" id="cyb:CYB_2919"/>
<dbReference type="eggNOG" id="COG0166">
    <property type="taxonomic scope" value="Bacteria"/>
</dbReference>
<dbReference type="HOGENOM" id="CLU_033288_0_0_3"/>
<dbReference type="OrthoDB" id="140919at2"/>
<dbReference type="UniPathway" id="UPA00109">
    <property type="reaction ID" value="UER00181"/>
</dbReference>
<dbReference type="UniPathway" id="UPA00138"/>
<dbReference type="Proteomes" id="UP000001938">
    <property type="component" value="Chromosome"/>
</dbReference>
<dbReference type="GO" id="GO:0005829">
    <property type="term" value="C:cytosol"/>
    <property type="evidence" value="ECO:0007669"/>
    <property type="project" value="TreeGrafter"/>
</dbReference>
<dbReference type="GO" id="GO:0097367">
    <property type="term" value="F:carbohydrate derivative binding"/>
    <property type="evidence" value="ECO:0007669"/>
    <property type="project" value="InterPro"/>
</dbReference>
<dbReference type="GO" id="GO:0004347">
    <property type="term" value="F:glucose-6-phosphate isomerase activity"/>
    <property type="evidence" value="ECO:0007669"/>
    <property type="project" value="UniProtKB-UniRule"/>
</dbReference>
<dbReference type="GO" id="GO:0048029">
    <property type="term" value="F:monosaccharide binding"/>
    <property type="evidence" value="ECO:0007669"/>
    <property type="project" value="TreeGrafter"/>
</dbReference>
<dbReference type="GO" id="GO:0006094">
    <property type="term" value="P:gluconeogenesis"/>
    <property type="evidence" value="ECO:0007669"/>
    <property type="project" value="UniProtKB-UniRule"/>
</dbReference>
<dbReference type="GO" id="GO:0051156">
    <property type="term" value="P:glucose 6-phosphate metabolic process"/>
    <property type="evidence" value="ECO:0007669"/>
    <property type="project" value="TreeGrafter"/>
</dbReference>
<dbReference type="GO" id="GO:0006096">
    <property type="term" value="P:glycolytic process"/>
    <property type="evidence" value="ECO:0007669"/>
    <property type="project" value="UniProtKB-UniRule"/>
</dbReference>
<dbReference type="CDD" id="cd05015">
    <property type="entry name" value="SIS_PGI_1"/>
    <property type="match status" value="1"/>
</dbReference>
<dbReference type="CDD" id="cd05016">
    <property type="entry name" value="SIS_PGI_2"/>
    <property type="match status" value="1"/>
</dbReference>
<dbReference type="FunFam" id="3.40.50.10490:FF:000021">
    <property type="entry name" value="Glucose-6-phosphate isomerase"/>
    <property type="match status" value="1"/>
</dbReference>
<dbReference type="FunFam" id="3.40.50.10490:FF:000023">
    <property type="entry name" value="Glucose-6-phosphate isomerase"/>
    <property type="match status" value="1"/>
</dbReference>
<dbReference type="Gene3D" id="3.40.50.10490">
    <property type="entry name" value="Glucose-6-phosphate isomerase like protein, domain 1"/>
    <property type="match status" value="2"/>
</dbReference>
<dbReference type="HAMAP" id="MF_00473">
    <property type="entry name" value="G6P_isomerase"/>
    <property type="match status" value="1"/>
</dbReference>
<dbReference type="InterPro" id="IPR001672">
    <property type="entry name" value="G6P_Isomerase"/>
</dbReference>
<dbReference type="InterPro" id="IPR018189">
    <property type="entry name" value="Phosphoglucose_isomerase_CS"/>
</dbReference>
<dbReference type="InterPro" id="IPR046348">
    <property type="entry name" value="SIS_dom_sf"/>
</dbReference>
<dbReference type="InterPro" id="IPR035476">
    <property type="entry name" value="SIS_PGI_1"/>
</dbReference>
<dbReference type="InterPro" id="IPR035482">
    <property type="entry name" value="SIS_PGI_2"/>
</dbReference>
<dbReference type="NCBIfam" id="NF010696">
    <property type="entry name" value="PRK14096.1"/>
    <property type="match status" value="1"/>
</dbReference>
<dbReference type="PANTHER" id="PTHR11469">
    <property type="entry name" value="GLUCOSE-6-PHOSPHATE ISOMERASE"/>
    <property type="match status" value="1"/>
</dbReference>
<dbReference type="PANTHER" id="PTHR11469:SF1">
    <property type="entry name" value="GLUCOSE-6-PHOSPHATE ISOMERASE"/>
    <property type="match status" value="1"/>
</dbReference>
<dbReference type="Pfam" id="PF00342">
    <property type="entry name" value="PGI"/>
    <property type="match status" value="2"/>
</dbReference>
<dbReference type="PRINTS" id="PR00662">
    <property type="entry name" value="G6PISOMERASE"/>
</dbReference>
<dbReference type="SUPFAM" id="SSF53697">
    <property type="entry name" value="SIS domain"/>
    <property type="match status" value="1"/>
</dbReference>
<dbReference type="PROSITE" id="PS00174">
    <property type="entry name" value="P_GLUCOSE_ISOMERASE_2"/>
    <property type="match status" value="1"/>
</dbReference>
<dbReference type="PROSITE" id="PS51463">
    <property type="entry name" value="P_GLUCOSE_ISOMERASE_3"/>
    <property type="match status" value="1"/>
</dbReference>
<keyword id="KW-0963">Cytoplasm</keyword>
<keyword id="KW-0312">Gluconeogenesis</keyword>
<keyword id="KW-0324">Glycolysis</keyword>
<keyword id="KW-0413">Isomerase</keyword>
<keyword id="KW-1185">Reference proteome</keyword>
<organism>
    <name type="scientific">Synechococcus sp. (strain JA-2-3B'a(2-13))</name>
    <name type="common">Cyanobacteria bacterium Yellowstone B-Prime</name>
    <dbReference type="NCBI Taxonomy" id="321332"/>
    <lineage>
        <taxon>Bacteria</taxon>
        <taxon>Bacillati</taxon>
        <taxon>Cyanobacteriota</taxon>
        <taxon>Cyanophyceae</taxon>
        <taxon>Synechococcales</taxon>
        <taxon>Synechococcaceae</taxon>
        <taxon>Synechococcus</taxon>
    </lineage>
</organism>
<gene>
    <name evidence="1" type="primary">pgi</name>
    <name type="ordered locus">CYB_2919</name>
</gene>
<accession>Q2JHU0</accession>
<comment type="function">
    <text evidence="1">Catalyzes the reversible isomerization of glucose-6-phosphate to fructose-6-phosphate.</text>
</comment>
<comment type="catalytic activity">
    <reaction evidence="1">
        <text>alpha-D-glucose 6-phosphate = beta-D-fructose 6-phosphate</text>
        <dbReference type="Rhea" id="RHEA:11816"/>
        <dbReference type="ChEBI" id="CHEBI:57634"/>
        <dbReference type="ChEBI" id="CHEBI:58225"/>
        <dbReference type="EC" id="5.3.1.9"/>
    </reaction>
</comment>
<comment type="pathway">
    <text evidence="1">Carbohydrate biosynthesis; gluconeogenesis.</text>
</comment>
<comment type="pathway">
    <text evidence="1">Carbohydrate degradation; glycolysis; D-glyceraldehyde 3-phosphate and glycerone phosphate from D-glucose: step 2/4.</text>
</comment>
<comment type="subcellular location">
    <subcellularLocation>
        <location evidence="1">Cytoplasm</location>
    </subcellularLocation>
</comment>
<comment type="similarity">
    <text evidence="1">Belongs to the GPI family.</text>
</comment>
<feature type="chain" id="PRO_0000252656" description="Glucose-6-phosphate isomerase">
    <location>
        <begin position="1"/>
        <end position="532"/>
    </location>
</feature>
<feature type="active site" description="Proton donor" evidence="1">
    <location>
        <position position="322"/>
    </location>
</feature>
<feature type="active site" evidence="1">
    <location>
        <position position="351"/>
    </location>
</feature>
<feature type="active site" evidence="1">
    <location>
        <position position="457"/>
    </location>
</feature>
<evidence type="ECO:0000255" key="1">
    <source>
        <dbReference type="HAMAP-Rule" id="MF_00473"/>
    </source>
</evidence>
<proteinExistence type="inferred from homology"/>
<reference key="1">
    <citation type="journal article" date="2007" name="ISME J.">
        <title>Population level functional diversity in a microbial community revealed by comparative genomic and metagenomic analyses.</title>
        <authorList>
            <person name="Bhaya D."/>
            <person name="Grossman A.R."/>
            <person name="Steunou A.-S."/>
            <person name="Khuri N."/>
            <person name="Cohan F.M."/>
            <person name="Hamamura N."/>
            <person name="Melendrez M.C."/>
            <person name="Bateson M.M."/>
            <person name="Ward D.M."/>
            <person name="Heidelberg J.F."/>
        </authorList>
    </citation>
    <scope>NUCLEOTIDE SEQUENCE [LARGE SCALE GENOMIC DNA]</scope>
    <source>
        <strain>JA-2-3B'a(2-13)</strain>
    </source>
</reference>